<sequence>MPGRERRDGGRSADKNDNNKGRNDRGRNDRNNRRGRGRDDDRNQYIERVVTINRVSKVVKGGRRFSFTALVIVGDGQGMVGVGYGKAKEVPAAIQKGAEEARKNFFRVPMIAGTITHPVQGEAAAGIVMLRPAAPGTGVIAGGATRPVLECAGIQDVLSKSLGSDNAINVVHATVDALKQLVRPEEVAARRGKSVEEVTPTRMLRARAGQGA</sequence>
<organism>
    <name type="scientific">Corynebacterium kroppenstedtii (strain DSM 44385 / JCM 11950 / CIP 105744 / CCUG 35717)</name>
    <dbReference type="NCBI Taxonomy" id="645127"/>
    <lineage>
        <taxon>Bacteria</taxon>
        <taxon>Bacillati</taxon>
        <taxon>Actinomycetota</taxon>
        <taxon>Actinomycetes</taxon>
        <taxon>Mycobacteriales</taxon>
        <taxon>Corynebacteriaceae</taxon>
        <taxon>Corynebacterium</taxon>
    </lineage>
</organism>
<feature type="chain" id="PRO_1000214316" description="Small ribosomal subunit protein uS5">
    <location>
        <begin position="1"/>
        <end position="212"/>
    </location>
</feature>
<feature type="domain" description="S5 DRBM" evidence="1">
    <location>
        <begin position="45"/>
        <end position="108"/>
    </location>
</feature>
<feature type="region of interest" description="Disordered" evidence="2">
    <location>
        <begin position="1"/>
        <end position="42"/>
    </location>
</feature>
<evidence type="ECO:0000255" key="1">
    <source>
        <dbReference type="HAMAP-Rule" id="MF_01307"/>
    </source>
</evidence>
<evidence type="ECO:0000256" key="2">
    <source>
        <dbReference type="SAM" id="MobiDB-lite"/>
    </source>
</evidence>
<evidence type="ECO:0000305" key="3"/>
<dbReference type="EMBL" id="CP001620">
    <property type="protein sequence ID" value="ACR18514.1"/>
    <property type="molecule type" value="Genomic_DNA"/>
</dbReference>
<dbReference type="RefSeq" id="WP_012732401.1">
    <property type="nucleotide sequence ID" value="NC_012704.1"/>
</dbReference>
<dbReference type="SMR" id="C4LL09"/>
<dbReference type="STRING" id="645127.ckrop_1793"/>
<dbReference type="GeneID" id="92726592"/>
<dbReference type="KEGG" id="ckp:ckrop_1793"/>
<dbReference type="eggNOG" id="COG0098">
    <property type="taxonomic scope" value="Bacteria"/>
</dbReference>
<dbReference type="HOGENOM" id="CLU_065898_1_0_11"/>
<dbReference type="OrthoDB" id="9809045at2"/>
<dbReference type="Proteomes" id="UP000001473">
    <property type="component" value="Chromosome"/>
</dbReference>
<dbReference type="GO" id="GO:0015935">
    <property type="term" value="C:small ribosomal subunit"/>
    <property type="evidence" value="ECO:0007669"/>
    <property type="project" value="InterPro"/>
</dbReference>
<dbReference type="GO" id="GO:0019843">
    <property type="term" value="F:rRNA binding"/>
    <property type="evidence" value="ECO:0007669"/>
    <property type="project" value="UniProtKB-UniRule"/>
</dbReference>
<dbReference type="GO" id="GO:0003735">
    <property type="term" value="F:structural constituent of ribosome"/>
    <property type="evidence" value="ECO:0007669"/>
    <property type="project" value="InterPro"/>
</dbReference>
<dbReference type="GO" id="GO:0006412">
    <property type="term" value="P:translation"/>
    <property type="evidence" value="ECO:0007669"/>
    <property type="project" value="UniProtKB-UniRule"/>
</dbReference>
<dbReference type="FunFam" id="3.30.160.20:FF:000001">
    <property type="entry name" value="30S ribosomal protein S5"/>
    <property type="match status" value="1"/>
</dbReference>
<dbReference type="FunFam" id="3.30.230.10:FF:000002">
    <property type="entry name" value="30S ribosomal protein S5"/>
    <property type="match status" value="1"/>
</dbReference>
<dbReference type="Gene3D" id="3.30.160.20">
    <property type="match status" value="1"/>
</dbReference>
<dbReference type="Gene3D" id="3.30.230.10">
    <property type="match status" value="1"/>
</dbReference>
<dbReference type="HAMAP" id="MF_01307_B">
    <property type="entry name" value="Ribosomal_uS5_B"/>
    <property type="match status" value="1"/>
</dbReference>
<dbReference type="InterPro" id="IPR020568">
    <property type="entry name" value="Ribosomal_Su5_D2-typ_SF"/>
</dbReference>
<dbReference type="InterPro" id="IPR000851">
    <property type="entry name" value="Ribosomal_uS5"/>
</dbReference>
<dbReference type="InterPro" id="IPR005712">
    <property type="entry name" value="Ribosomal_uS5_bac-type"/>
</dbReference>
<dbReference type="InterPro" id="IPR005324">
    <property type="entry name" value="Ribosomal_uS5_C"/>
</dbReference>
<dbReference type="InterPro" id="IPR013810">
    <property type="entry name" value="Ribosomal_uS5_N"/>
</dbReference>
<dbReference type="InterPro" id="IPR018192">
    <property type="entry name" value="Ribosomal_uS5_N_CS"/>
</dbReference>
<dbReference type="InterPro" id="IPR014721">
    <property type="entry name" value="Ribsml_uS5_D2-typ_fold_subgr"/>
</dbReference>
<dbReference type="NCBIfam" id="TIGR01021">
    <property type="entry name" value="rpsE_bact"/>
    <property type="match status" value="1"/>
</dbReference>
<dbReference type="PANTHER" id="PTHR48277">
    <property type="entry name" value="MITOCHONDRIAL RIBOSOMAL PROTEIN S5"/>
    <property type="match status" value="1"/>
</dbReference>
<dbReference type="PANTHER" id="PTHR48277:SF1">
    <property type="entry name" value="MITOCHONDRIAL RIBOSOMAL PROTEIN S5"/>
    <property type="match status" value="1"/>
</dbReference>
<dbReference type="Pfam" id="PF00333">
    <property type="entry name" value="Ribosomal_S5"/>
    <property type="match status" value="1"/>
</dbReference>
<dbReference type="Pfam" id="PF03719">
    <property type="entry name" value="Ribosomal_S5_C"/>
    <property type="match status" value="1"/>
</dbReference>
<dbReference type="SUPFAM" id="SSF54768">
    <property type="entry name" value="dsRNA-binding domain-like"/>
    <property type="match status" value="1"/>
</dbReference>
<dbReference type="SUPFAM" id="SSF54211">
    <property type="entry name" value="Ribosomal protein S5 domain 2-like"/>
    <property type="match status" value="1"/>
</dbReference>
<dbReference type="PROSITE" id="PS00585">
    <property type="entry name" value="RIBOSOMAL_S5"/>
    <property type="match status" value="1"/>
</dbReference>
<dbReference type="PROSITE" id="PS50881">
    <property type="entry name" value="S5_DSRBD"/>
    <property type="match status" value="1"/>
</dbReference>
<reference key="1">
    <citation type="journal article" date="2008" name="J. Biotechnol.">
        <title>Ultrafast pyrosequencing of Corynebacterium kroppenstedtii DSM44385 revealed insights into the physiology of a lipophilic corynebacterium that lacks mycolic acids.</title>
        <authorList>
            <person name="Tauch A."/>
            <person name="Schneider J."/>
            <person name="Szczepanowski R."/>
            <person name="Tilker A."/>
            <person name="Viehoever P."/>
            <person name="Gartemann K.-H."/>
            <person name="Arnold W."/>
            <person name="Blom J."/>
            <person name="Brinkrolf K."/>
            <person name="Brune I."/>
            <person name="Goetker S."/>
            <person name="Weisshaar B."/>
            <person name="Goesmann A."/>
            <person name="Droege M."/>
            <person name="Puehler A."/>
        </authorList>
    </citation>
    <scope>NUCLEOTIDE SEQUENCE [LARGE SCALE GENOMIC DNA]</scope>
    <source>
        <strain>DSM 44385 / JCM 11950 / CIP 105744 / CCUG 35717</strain>
    </source>
</reference>
<proteinExistence type="inferred from homology"/>
<gene>
    <name evidence="1" type="primary">rpsE</name>
    <name type="ordered locus">ckrop_1793</name>
</gene>
<comment type="function">
    <text evidence="1">With S4 and S12 plays an important role in translational accuracy.</text>
</comment>
<comment type="function">
    <text evidence="1">Located at the back of the 30S subunit body where it stabilizes the conformation of the head with respect to the body.</text>
</comment>
<comment type="subunit">
    <text evidence="1">Part of the 30S ribosomal subunit. Contacts proteins S4 and S8.</text>
</comment>
<comment type="domain">
    <text>The N-terminal domain interacts with the head of the 30S subunit; the C-terminal domain interacts with the body and contacts protein S4. The interaction surface between S4 and S5 is involved in control of translational fidelity.</text>
</comment>
<comment type="similarity">
    <text evidence="1">Belongs to the universal ribosomal protein uS5 family.</text>
</comment>
<protein>
    <recommendedName>
        <fullName evidence="1">Small ribosomal subunit protein uS5</fullName>
    </recommendedName>
    <alternativeName>
        <fullName evidence="3">30S ribosomal protein S5</fullName>
    </alternativeName>
</protein>
<keyword id="KW-1185">Reference proteome</keyword>
<keyword id="KW-0687">Ribonucleoprotein</keyword>
<keyword id="KW-0689">Ribosomal protein</keyword>
<keyword id="KW-0694">RNA-binding</keyword>
<keyword id="KW-0699">rRNA-binding</keyword>
<name>RS5_CORK4</name>
<accession>C4LL09</accession>